<comment type="subcellular location">
    <subcellularLocation>
        <location evidence="1">Secreted</location>
    </subcellularLocation>
</comment>
<comment type="tissue specificity">
    <text>Expressed by the venom duct.</text>
</comment>
<comment type="miscellaneous">
    <text>The mature peptide does not contain cysteine residue.</text>
</comment>
<comment type="similarity">
    <text evidence="3">Belongs to the conotoxin T superfamily.</text>
</comment>
<proteinExistence type="evidence at transcript level"/>
<dbReference type="EMBL" id="AF215002">
    <property type="protein sequence ID" value="AAG60430.1"/>
    <property type="molecule type" value="mRNA"/>
</dbReference>
<dbReference type="ConoServer" id="689">
    <property type="toxin name" value="ArMLCL-022"/>
</dbReference>
<dbReference type="GO" id="GO:0005576">
    <property type="term" value="C:extracellular region"/>
    <property type="evidence" value="ECO:0007669"/>
    <property type="project" value="UniProtKB-SubCell"/>
</dbReference>
<dbReference type="GO" id="GO:0090729">
    <property type="term" value="F:toxin activity"/>
    <property type="evidence" value="ECO:0007669"/>
    <property type="project" value="UniProtKB-KW"/>
</dbReference>
<dbReference type="InterPro" id="IPR031565">
    <property type="entry name" value="T-conotoxin"/>
</dbReference>
<dbReference type="Pfam" id="PF16981">
    <property type="entry name" value="Chi-conotoxin"/>
    <property type="match status" value="1"/>
</dbReference>
<reference key="1">
    <citation type="journal article" date="2001" name="Mol. Biol. Evol.">
        <title>Mechanisms for evolving hypervariability: the case of conopeptides.</title>
        <authorList>
            <person name="Conticello S.G."/>
            <person name="Gilad Y."/>
            <person name="Avidan N."/>
            <person name="Ben-Asher E."/>
            <person name="Levy Z."/>
            <person name="Fainzilber M."/>
        </authorList>
    </citation>
    <scope>NUCLEOTIDE SEQUENCE [MRNA]</scope>
    <source>
        <tissue>Venom duct</tissue>
    </source>
</reference>
<feature type="signal peptide" evidence="2">
    <location>
        <begin position="1"/>
        <end position="19"/>
    </location>
</feature>
<feature type="propeptide" id="PRO_0000404995" evidence="2">
    <location>
        <begin position="20"/>
        <end position="52"/>
    </location>
</feature>
<feature type="peptide" id="PRO_0000404996" description="Conotoxin ArMLCL-022" evidence="2">
    <location>
        <begin position="53"/>
        <end position="76"/>
    </location>
</feature>
<name>CT0C_CONAE</name>
<organism>
    <name type="scientific">Conus arenatus</name>
    <name type="common">Sand-dusted cone</name>
    <dbReference type="NCBI Taxonomy" id="89451"/>
    <lineage>
        <taxon>Eukaryota</taxon>
        <taxon>Metazoa</taxon>
        <taxon>Spiralia</taxon>
        <taxon>Lophotrochozoa</taxon>
        <taxon>Mollusca</taxon>
        <taxon>Gastropoda</taxon>
        <taxon>Caenogastropoda</taxon>
        <taxon>Neogastropoda</taxon>
        <taxon>Conoidea</taxon>
        <taxon>Conidae</taxon>
        <taxon>Conus</taxon>
    </lineage>
</organism>
<sequence length="76" mass="8204">MLCLPVFIILLLLASTAASNPLETRIQSDLIRAALEDADMKTERGFLGVLMKGLKYLGKVVPIGSLVKDLLSSSDE</sequence>
<keyword id="KW-0528">Neurotoxin</keyword>
<keyword id="KW-0964">Secreted</keyword>
<keyword id="KW-0732">Signal</keyword>
<keyword id="KW-0800">Toxin</keyword>
<accession>Q9BPD2</accession>
<evidence type="ECO:0000250" key="1"/>
<evidence type="ECO:0000255" key="2"/>
<evidence type="ECO:0000305" key="3"/>
<protein>
    <recommendedName>
        <fullName>Conotoxin ArMLCL-022</fullName>
    </recommendedName>
</protein>